<protein>
    <recommendedName>
        <fullName>Outer membrane lipoprotein omp10</fullName>
    </recommendedName>
    <alternativeName>
        <fullName>10 kDa OMP</fullName>
    </alternativeName>
    <alternativeName>
        <fullName>Minor outer membrane protein omp10</fullName>
    </alternativeName>
</protein>
<feature type="signal peptide" evidence="1">
    <location>
        <begin position="1"/>
        <end position="19"/>
    </location>
</feature>
<feature type="chain" id="PRO_0000018239" description="Outer membrane lipoprotein omp10">
    <location>
        <begin position="20"/>
        <end position="126"/>
    </location>
</feature>
<feature type="lipid moiety-binding region" description="N-palmitoyl cysteine" evidence="1">
    <location>
        <position position="20"/>
    </location>
</feature>
<feature type="lipid moiety-binding region" description="S-diacylglycerol cysteine" evidence="1">
    <location>
        <position position="20"/>
    </location>
</feature>
<evidence type="ECO:0000305" key="1"/>
<name>OMP10_BRUSU</name>
<sequence>MKRFRIVAPLALMSLALAACETTGPGSGNAPIIAHTPAGIEGSWVDPNGIASSFNGGIFETRTTDTNEKLAEGNYLYLSPQLVEINMRSIVRGTTSKVNCALVSPTQLNCTSSAGSRFSLTRRNAG</sequence>
<proteinExistence type="evidence at protein level"/>
<accession>P0A3N9</accession>
<accession>G0KES5</accession>
<accession>Q44661</accession>
<accession>Q93TG3</accession>
<reference key="1">
    <citation type="journal article" date="2002" name="Proc. Natl. Acad. Sci. U.S.A.">
        <title>The Brucella suis genome reveals fundamental similarities between animal and plant pathogens and symbionts.</title>
        <authorList>
            <person name="Paulsen I.T."/>
            <person name="Seshadri R."/>
            <person name="Nelson K.E."/>
            <person name="Eisen J.A."/>
            <person name="Heidelberg J.F."/>
            <person name="Read T.D."/>
            <person name="Dodson R.J."/>
            <person name="Umayam L.A."/>
            <person name="Brinkac L.M."/>
            <person name="Beanan M.J."/>
            <person name="Daugherty S.C."/>
            <person name="DeBoy R.T."/>
            <person name="Durkin A.S."/>
            <person name="Kolonay J.F."/>
            <person name="Madupu R."/>
            <person name="Nelson W.C."/>
            <person name="Ayodeji B."/>
            <person name="Kraul M."/>
            <person name="Shetty J."/>
            <person name="Malek J.A."/>
            <person name="Van Aken S.E."/>
            <person name="Riedmuller S."/>
            <person name="Tettelin H."/>
            <person name="Gill S.R."/>
            <person name="White O."/>
            <person name="Salzberg S.L."/>
            <person name="Hoover D.L."/>
            <person name="Lindler L.E."/>
            <person name="Halling S.M."/>
            <person name="Boyle S.M."/>
            <person name="Fraser C.M."/>
        </authorList>
    </citation>
    <scope>NUCLEOTIDE SEQUENCE [LARGE SCALE GENOMIC DNA]</scope>
    <source>
        <strain>1330</strain>
    </source>
</reference>
<reference key="2">
    <citation type="journal article" date="2011" name="J. Bacteriol.">
        <title>Revised genome sequence of Brucella suis 1330.</title>
        <authorList>
            <person name="Tae H."/>
            <person name="Shallom S."/>
            <person name="Settlage R."/>
            <person name="Preston D."/>
            <person name="Adams L.G."/>
            <person name="Garner H.R."/>
        </authorList>
    </citation>
    <scope>NUCLEOTIDE SEQUENCE [LARGE SCALE GENOMIC DNA]</scope>
    <source>
        <strain>1330</strain>
    </source>
</reference>
<reference key="3">
    <citation type="journal article" date="1999" name="Infect. Immun.">
        <title>Outer membrane proteins Omp10, Omp16, and Omp19 of Brucella spp. are lipoproteins.</title>
        <authorList>
            <person name="Tibor A."/>
            <person name="Decelle B."/>
            <person name="Letesson J.-J."/>
        </authorList>
    </citation>
    <scope>CHARACTERIZATION</scope>
</reference>
<keyword id="KW-0998">Cell outer membrane</keyword>
<keyword id="KW-0449">Lipoprotein</keyword>
<keyword id="KW-0472">Membrane</keyword>
<keyword id="KW-0564">Palmitate</keyword>
<keyword id="KW-0732">Signal</keyword>
<organism>
    <name type="scientific">Brucella suis biovar 1 (strain 1330)</name>
    <dbReference type="NCBI Taxonomy" id="204722"/>
    <lineage>
        <taxon>Bacteria</taxon>
        <taxon>Pseudomonadati</taxon>
        <taxon>Pseudomonadota</taxon>
        <taxon>Alphaproteobacteria</taxon>
        <taxon>Hyphomicrobiales</taxon>
        <taxon>Brucellaceae</taxon>
        <taxon>Brucella/Ochrobactrum group</taxon>
        <taxon>Brucella</taxon>
    </lineage>
</organism>
<dbReference type="EMBL" id="AE014292">
    <property type="protein sequence ID" value="AAN33289.1"/>
    <property type="molecule type" value="Genomic_DNA"/>
</dbReference>
<dbReference type="EMBL" id="CP002998">
    <property type="protein sequence ID" value="AEM19569.1"/>
    <property type="molecule type" value="Genomic_DNA"/>
</dbReference>
<dbReference type="RefSeq" id="WP_002966502.1">
    <property type="nucleotide sequence ID" value="NZ_KN046805.1"/>
</dbReference>
<dbReference type="GeneID" id="97535703"/>
<dbReference type="KEGG" id="bms:BRA0077"/>
<dbReference type="KEGG" id="bsi:BS1330_II0077"/>
<dbReference type="PATRIC" id="fig|204722.21.peg.3535"/>
<dbReference type="HOGENOM" id="CLU_136213_1_0_5"/>
<dbReference type="PhylomeDB" id="P0A3N9"/>
<dbReference type="PRO" id="PR:P0A3N9"/>
<dbReference type="Proteomes" id="UP000007104">
    <property type="component" value="Chromosome II"/>
</dbReference>
<dbReference type="GO" id="GO:0009279">
    <property type="term" value="C:cell outer membrane"/>
    <property type="evidence" value="ECO:0007669"/>
    <property type="project" value="UniProtKB-SubCell"/>
</dbReference>
<dbReference type="InterPro" id="IPR049857">
    <property type="entry name" value="Omp10-like"/>
</dbReference>
<dbReference type="NCBIfam" id="NF041251">
    <property type="entry name" value="omp10_alpha_prot"/>
    <property type="match status" value="1"/>
</dbReference>
<dbReference type="PROSITE" id="PS51257">
    <property type="entry name" value="PROKAR_LIPOPROTEIN"/>
    <property type="match status" value="1"/>
</dbReference>
<comment type="subcellular location">
    <subcellularLocation>
        <location>Cell outer membrane</location>
        <topology>Lipid-anchor</topology>
    </subcellularLocation>
</comment>
<comment type="miscellaneous">
    <text>Elicits an immune response in B.melitensis-infected sheep but not in B.abortus-infected cattle.</text>
</comment>
<comment type="similarity">
    <text evidence="1">Belongs to the rhizobiaceae omp10 lipoprotein family.</text>
</comment>
<gene>
    <name type="primary">omp10</name>
    <name type="ordered locus">BRA0077</name>
    <name type="ordered locus">BS1330_II0077</name>
</gene>